<proteinExistence type="inferred from homology"/>
<keyword id="KW-0648">Protein biosynthesis</keyword>
<keyword id="KW-0808">Transferase</keyword>
<comment type="function">
    <text evidence="1">Attaches a formyl group to the free amino group of methionyl-tRNA(fMet). The formyl group appears to play a dual role in the initiator identity of N-formylmethionyl-tRNA by promoting its recognition by IF2 and preventing the misappropriation of this tRNA by the elongation apparatus.</text>
</comment>
<comment type="catalytic activity">
    <reaction evidence="1">
        <text>L-methionyl-tRNA(fMet) + (6R)-10-formyltetrahydrofolate = N-formyl-L-methionyl-tRNA(fMet) + (6S)-5,6,7,8-tetrahydrofolate + H(+)</text>
        <dbReference type="Rhea" id="RHEA:24380"/>
        <dbReference type="Rhea" id="RHEA-COMP:9952"/>
        <dbReference type="Rhea" id="RHEA-COMP:9953"/>
        <dbReference type="ChEBI" id="CHEBI:15378"/>
        <dbReference type="ChEBI" id="CHEBI:57453"/>
        <dbReference type="ChEBI" id="CHEBI:78530"/>
        <dbReference type="ChEBI" id="CHEBI:78844"/>
        <dbReference type="ChEBI" id="CHEBI:195366"/>
        <dbReference type="EC" id="2.1.2.9"/>
    </reaction>
</comment>
<comment type="similarity">
    <text evidence="1">Belongs to the Fmt family.</text>
</comment>
<organism>
    <name type="scientific">Cereibacter sphaeroides (strain ATCC 17029 / ATH 2.4.9)</name>
    <name type="common">Rhodobacter sphaeroides</name>
    <dbReference type="NCBI Taxonomy" id="349101"/>
    <lineage>
        <taxon>Bacteria</taxon>
        <taxon>Pseudomonadati</taxon>
        <taxon>Pseudomonadota</taxon>
        <taxon>Alphaproteobacteria</taxon>
        <taxon>Rhodobacterales</taxon>
        <taxon>Paracoccaceae</taxon>
        <taxon>Cereibacter</taxon>
    </lineage>
</organism>
<protein>
    <recommendedName>
        <fullName evidence="1">Methionyl-tRNA formyltransferase</fullName>
        <ecNumber evidence="1">2.1.2.9</ecNumber>
    </recommendedName>
</protein>
<name>FMT_CERS1</name>
<reference key="1">
    <citation type="submission" date="2007-02" db="EMBL/GenBank/DDBJ databases">
        <title>Complete sequence of chromosome 1 of Rhodobacter sphaeroides ATCC 17029.</title>
        <authorList>
            <person name="Copeland A."/>
            <person name="Lucas S."/>
            <person name="Lapidus A."/>
            <person name="Barry K."/>
            <person name="Detter J.C."/>
            <person name="Glavina del Rio T."/>
            <person name="Hammon N."/>
            <person name="Israni S."/>
            <person name="Dalin E."/>
            <person name="Tice H."/>
            <person name="Pitluck S."/>
            <person name="Kiss H."/>
            <person name="Brettin T."/>
            <person name="Bruce D."/>
            <person name="Han C."/>
            <person name="Tapia R."/>
            <person name="Gilna P."/>
            <person name="Schmutz J."/>
            <person name="Larimer F."/>
            <person name="Land M."/>
            <person name="Hauser L."/>
            <person name="Kyrpides N."/>
            <person name="Mikhailova N."/>
            <person name="Richardson P."/>
            <person name="Mackenzie C."/>
            <person name="Choudhary M."/>
            <person name="Donohue T.J."/>
            <person name="Kaplan S."/>
        </authorList>
    </citation>
    <scope>NUCLEOTIDE SEQUENCE [LARGE SCALE GENOMIC DNA]</scope>
    <source>
        <strain>ATCC 17029 / ATH 2.4.9</strain>
    </source>
</reference>
<gene>
    <name evidence="1" type="primary">fmt</name>
    <name type="ordered locus">Rsph17029_2535</name>
</gene>
<dbReference type="EC" id="2.1.2.9" evidence="1"/>
<dbReference type="EMBL" id="CP000577">
    <property type="protein sequence ID" value="ABN77637.1"/>
    <property type="molecule type" value="Genomic_DNA"/>
</dbReference>
<dbReference type="RefSeq" id="WP_011841731.1">
    <property type="nucleotide sequence ID" value="NC_009049.1"/>
</dbReference>
<dbReference type="SMR" id="A3PMS1"/>
<dbReference type="KEGG" id="rsh:Rsph17029_2535"/>
<dbReference type="HOGENOM" id="CLU_033347_1_2_5"/>
<dbReference type="GO" id="GO:0005829">
    <property type="term" value="C:cytosol"/>
    <property type="evidence" value="ECO:0007669"/>
    <property type="project" value="TreeGrafter"/>
</dbReference>
<dbReference type="GO" id="GO:0004479">
    <property type="term" value="F:methionyl-tRNA formyltransferase activity"/>
    <property type="evidence" value="ECO:0007669"/>
    <property type="project" value="UniProtKB-UniRule"/>
</dbReference>
<dbReference type="CDD" id="cd08646">
    <property type="entry name" value="FMT_core_Met-tRNA-FMT_N"/>
    <property type="match status" value="1"/>
</dbReference>
<dbReference type="CDD" id="cd08704">
    <property type="entry name" value="Met_tRNA_FMT_C"/>
    <property type="match status" value="1"/>
</dbReference>
<dbReference type="FunFam" id="3.40.50.12230:FF:000001">
    <property type="entry name" value="Methionyl-tRNA formyltransferase"/>
    <property type="match status" value="1"/>
</dbReference>
<dbReference type="Gene3D" id="3.40.50.12230">
    <property type="match status" value="1"/>
</dbReference>
<dbReference type="HAMAP" id="MF_00182">
    <property type="entry name" value="Formyl_trans"/>
    <property type="match status" value="1"/>
</dbReference>
<dbReference type="InterPro" id="IPR005794">
    <property type="entry name" value="Fmt"/>
</dbReference>
<dbReference type="InterPro" id="IPR005793">
    <property type="entry name" value="Formyl_trans_C"/>
</dbReference>
<dbReference type="InterPro" id="IPR002376">
    <property type="entry name" value="Formyl_transf_N"/>
</dbReference>
<dbReference type="InterPro" id="IPR036477">
    <property type="entry name" value="Formyl_transf_N_sf"/>
</dbReference>
<dbReference type="InterPro" id="IPR011034">
    <property type="entry name" value="Formyl_transferase-like_C_sf"/>
</dbReference>
<dbReference type="InterPro" id="IPR001555">
    <property type="entry name" value="GART_AS"/>
</dbReference>
<dbReference type="InterPro" id="IPR044135">
    <property type="entry name" value="Met-tRNA-FMT_C"/>
</dbReference>
<dbReference type="InterPro" id="IPR041711">
    <property type="entry name" value="Met-tRNA-FMT_N"/>
</dbReference>
<dbReference type="NCBIfam" id="TIGR00460">
    <property type="entry name" value="fmt"/>
    <property type="match status" value="1"/>
</dbReference>
<dbReference type="PANTHER" id="PTHR11138">
    <property type="entry name" value="METHIONYL-TRNA FORMYLTRANSFERASE"/>
    <property type="match status" value="1"/>
</dbReference>
<dbReference type="PANTHER" id="PTHR11138:SF5">
    <property type="entry name" value="METHIONYL-TRNA FORMYLTRANSFERASE, MITOCHONDRIAL"/>
    <property type="match status" value="1"/>
</dbReference>
<dbReference type="Pfam" id="PF02911">
    <property type="entry name" value="Formyl_trans_C"/>
    <property type="match status" value="1"/>
</dbReference>
<dbReference type="Pfam" id="PF00551">
    <property type="entry name" value="Formyl_trans_N"/>
    <property type="match status" value="1"/>
</dbReference>
<dbReference type="SUPFAM" id="SSF50486">
    <property type="entry name" value="FMT C-terminal domain-like"/>
    <property type="match status" value="1"/>
</dbReference>
<dbReference type="SUPFAM" id="SSF53328">
    <property type="entry name" value="Formyltransferase"/>
    <property type="match status" value="1"/>
</dbReference>
<dbReference type="PROSITE" id="PS00373">
    <property type="entry name" value="GART"/>
    <property type="match status" value="1"/>
</dbReference>
<evidence type="ECO:0000255" key="1">
    <source>
        <dbReference type="HAMAP-Rule" id="MF_00182"/>
    </source>
</evidence>
<evidence type="ECO:0000256" key="2">
    <source>
        <dbReference type="SAM" id="MobiDB-lite"/>
    </source>
</evidence>
<sequence length="302" mass="32427">MRLIFMGSPDFSVPVLEALHAHHEVVCVYCQPPRPAGRGKKDRPTPVQTRAEELGLPVRYPTSLRTPEAQAEFAALGAEAAVVVAYGLILPQPILDAPERGCLNIHASLLPRWRGAAPIHRAILAGDEETGICIMQMEAGLDTGPVLMCEKTHIGPEETVQDLHDRLSDMGARLILGALGALDDLVPRPQPDAGVTYAEKIAKAEAGIDWTRPAAEIDRQIRGLSPFPGAWTLLNGERVKLLRCRLAEGQGAPGAVLPGLTIACGTGAVEITLAQREGKRPMEPEEFLRGFPLPEGSRAHTA</sequence>
<feature type="chain" id="PRO_1000020144" description="Methionyl-tRNA formyltransferase">
    <location>
        <begin position="1"/>
        <end position="302"/>
    </location>
</feature>
<feature type="region of interest" description="Disordered" evidence="2">
    <location>
        <begin position="276"/>
        <end position="302"/>
    </location>
</feature>
<feature type="compositionally biased region" description="Basic and acidic residues" evidence="2">
    <location>
        <begin position="276"/>
        <end position="288"/>
    </location>
</feature>
<feature type="binding site" evidence="1">
    <location>
        <begin position="108"/>
        <end position="111"/>
    </location>
    <ligand>
        <name>(6S)-5,6,7,8-tetrahydrofolate</name>
        <dbReference type="ChEBI" id="CHEBI:57453"/>
    </ligand>
</feature>
<accession>A3PMS1</accession>